<gene>
    <name type="primary">llp</name>
    <name evidence="5" type="ORF">T5.158</name>
    <name evidence="6" type="ORF">T5p154</name>
</gene>
<dbReference type="EMBL" id="X75922">
    <property type="protein sequence ID" value="CAA53520.1"/>
    <property type="molecule type" value="Genomic_DNA"/>
</dbReference>
<dbReference type="EMBL" id="AY543070">
    <property type="protein sequence ID" value="AAS77197.1"/>
    <property type="molecule type" value="Genomic_DNA"/>
</dbReference>
<dbReference type="EMBL" id="AY692264">
    <property type="protein sequence ID" value="AAU05293.1"/>
    <property type="molecule type" value="Genomic_DNA"/>
</dbReference>
<dbReference type="EMBL" id="AY587007">
    <property type="protein sequence ID" value="AAX12084.1"/>
    <property type="molecule type" value="Genomic_DNA"/>
</dbReference>
<dbReference type="PIR" id="S46547">
    <property type="entry name" value="S46547"/>
</dbReference>
<dbReference type="PDB" id="7QJF">
    <property type="method" value="NMR"/>
    <property type="chains" value="A=17-77"/>
</dbReference>
<dbReference type="PDB" id="8A60">
    <property type="method" value="X-ray"/>
    <property type="resolution" value="3.37 A"/>
    <property type="chains" value="B=1-77"/>
</dbReference>
<dbReference type="PDBsum" id="7QJF"/>
<dbReference type="PDBsum" id="8A60"/>
<dbReference type="SMR" id="Q38162"/>
<dbReference type="KEGG" id="vg:2777682"/>
<dbReference type="Proteomes" id="UP000002107">
    <property type="component" value="Genome"/>
</dbReference>
<dbReference type="Proteomes" id="UP000002141">
    <property type="component" value="Segment"/>
</dbReference>
<dbReference type="Proteomes" id="UP000002503">
    <property type="component" value="Segment"/>
</dbReference>
<dbReference type="GO" id="GO:0020002">
    <property type="term" value="C:host cell plasma membrane"/>
    <property type="evidence" value="ECO:0007669"/>
    <property type="project" value="UniProtKB-SubCell"/>
</dbReference>
<dbReference type="GO" id="GO:0016020">
    <property type="term" value="C:membrane"/>
    <property type="evidence" value="ECO:0007669"/>
    <property type="project" value="UniProtKB-KW"/>
</dbReference>
<dbReference type="GO" id="GO:1902735">
    <property type="term" value="P:negative regulation of receptor-mediated virion attachment to host cell"/>
    <property type="evidence" value="ECO:0000315"/>
    <property type="project" value="CACAO"/>
</dbReference>
<dbReference type="GO" id="GO:0098669">
    <property type="term" value="P:superinfection exclusion"/>
    <property type="evidence" value="ECO:0007669"/>
    <property type="project" value="UniProtKB-KW"/>
</dbReference>
<organism>
    <name type="scientific">Escherichia phage T5</name>
    <name type="common">Enterobacteria phage T5</name>
    <dbReference type="NCBI Taxonomy" id="2695836"/>
    <lineage>
        <taxon>Viruses</taxon>
        <taxon>Duplodnaviria</taxon>
        <taxon>Heunggongvirae</taxon>
        <taxon>Uroviricota</taxon>
        <taxon>Caudoviricetes</taxon>
        <taxon>Demerecviridae</taxon>
        <taxon>Markadamsvirinae</taxon>
        <taxon>Tequintavirus</taxon>
        <taxon>Tequintavirus T5</taxon>
    </lineage>
</organism>
<evidence type="ECO:0000269" key="1">
    <source>
    </source>
</evidence>
<evidence type="ECO:0000269" key="2">
    <source>
    </source>
</evidence>
<evidence type="ECO:0000305" key="3"/>
<evidence type="ECO:0000305" key="4">
    <source>
    </source>
</evidence>
<evidence type="ECO:0000312" key="5">
    <source>
        <dbReference type="EMBL" id="AAS77197.1"/>
    </source>
</evidence>
<evidence type="ECO:0000312" key="6">
    <source>
        <dbReference type="EMBL" id="AAU05293.1"/>
    </source>
</evidence>
<evidence type="ECO:0000312" key="7">
    <source>
        <dbReference type="EMBL" id="AAX12084.1"/>
    </source>
</evidence>
<evidence type="ECO:0007829" key="8">
    <source>
        <dbReference type="PDB" id="7QJF"/>
    </source>
</evidence>
<feature type="signal peptide">
    <location>
        <begin position="1"/>
        <end position="15"/>
    </location>
</feature>
<feature type="chain" id="PRO_0000003347" description="Lytic conversion lipoprotein">
    <location>
        <begin position="16"/>
        <end position="77"/>
    </location>
</feature>
<feature type="lipid moiety-binding region" description="N-palmitoyl cysteine; by host" evidence="3">
    <location>
        <position position="16"/>
    </location>
</feature>
<feature type="lipid moiety-binding region" description="S-diacylglycerol cysteine; by host" evidence="2">
    <location>
        <position position="16"/>
    </location>
</feature>
<feature type="strand" evidence="8">
    <location>
        <begin position="18"/>
        <end position="20"/>
    </location>
</feature>
<feature type="strand" evidence="8">
    <location>
        <begin position="25"/>
        <end position="32"/>
    </location>
</feature>
<feature type="strand" evidence="8">
    <location>
        <begin position="35"/>
        <end position="45"/>
    </location>
</feature>
<feature type="strand" evidence="8">
    <location>
        <begin position="48"/>
        <end position="52"/>
    </location>
</feature>
<feature type="strand" evidence="8">
    <location>
        <begin position="54"/>
        <end position="57"/>
    </location>
</feature>
<feature type="strand" evidence="8">
    <location>
        <begin position="60"/>
        <end position="62"/>
    </location>
</feature>
<feature type="helix" evidence="8">
    <location>
        <begin position="64"/>
        <end position="66"/>
    </location>
</feature>
<keyword id="KW-0002">3D-structure</keyword>
<keyword id="KW-0244">Early protein</keyword>
<keyword id="KW-1033">Host cell outer membrane</keyword>
<keyword id="KW-1043">Host membrane</keyword>
<keyword id="KW-0945">Host-virus interaction</keyword>
<keyword id="KW-0449">Lipoprotein</keyword>
<keyword id="KW-0472">Membrane</keyword>
<keyword id="KW-0564">Palmitate</keyword>
<keyword id="KW-1185">Reference proteome</keyword>
<keyword id="KW-0732">Signal</keyword>
<keyword id="KW-1260">Superinfection exclusion</keyword>
<protein>
    <recommendedName>
        <fullName evidence="6">Lytic conversion lipoprotein</fullName>
    </recommendedName>
</protein>
<comment type="function">
    <text evidence="1 2">Inhibits of the adsorption of T5 to its FhuA receptor. By this means, T5 within cells excludes superinfection by T5 and other phages using FhuA receptor as a ligand.</text>
</comment>
<comment type="subcellular location">
    <subcellularLocation>
        <location evidence="2">Host cell outer membrane</location>
        <topology evidence="3">Lipid-anchor</topology>
    </subcellularLocation>
    <text evidence="3">Attached to the host membrane by a lipid anchor.</text>
</comment>
<comment type="induction">
    <text evidence="2 4">Expressed early during infection.</text>
</comment>
<proteinExistence type="evidence at protein level"/>
<name>LLP_BPT5</name>
<reference key="1">
    <citation type="journal article" date="1994" name="Mol. Microbiol.">
        <title>Lytic conversion of Escherichia coli by bacteriophage T5: blocking of the FhuA receptor protein by a lipoprotein expressed early during infection.</title>
        <authorList>
            <person name="Decker K."/>
            <person name="Krauel V."/>
            <person name="Meesmann A."/>
            <person name="Heller K.J."/>
        </authorList>
    </citation>
    <scope>NUCLEOTIDE SEQUENCE [GENOMIC DNA]</scope>
    <scope>DIACYLGLYCEROL AT CYS-16</scope>
    <scope>FUNCTION</scope>
    <scope>INDUCTION</scope>
    <scope>SUBCELLULAR LOCATION</scope>
</reference>
<reference key="2">
    <citation type="submission" date="2004-01" db="EMBL/GenBank/DDBJ databases">
        <title>Bacteriophage T5 complete genome.</title>
        <authorList>
            <person name="Ksenzenko V.N."/>
            <person name="Kaliman A.V."/>
            <person name="Krutilina A.I."/>
            <person name="Shlyapnikov M.G."/>
        </authorList>
    </citation>
    <scope>NUCLEOTIDE SEQUENCE [LARGE SCALE GENOMIC DNA]</scope>
</reference>
<reference key="3">
    <citation type="journal article" date="2005" name="Virology">
        <title>Complete genome sequence of bacteriophage T5.</title>
        <authorList>
            <person name="Wang J."/>
            <person name="Jiang Y."/>
            <person name="Vincent M."/>
            <person name="Sun Y."/>
            <person name="Yu H."/>
            <person name="Wang J."/>
            <person name="Bao Q."/>
            <person name="Kong H."/>
            <person name="Hu S."/>
        </authorList>
    </citation>
    <scope>NUCLEOTIDE SEQUENCE [LARGE SCALE GENOMIC DNA]</scope>
    <scope>INDUCTION</scope>
    <source>
        <strain evidence="7">ATCC 11303-B5</strain>
    </source>
</reference>
<reference key="4">
    <citation type="journal article" date="2014" name="J. Virol.">
        <title>Insights into bacteriophage T5 structure from analysis of its morphogenesis genes and protein components.</title>
        <authorList>
            <person name="Zivanovic Y."/>
            <person name="Confalonieri F."/>
            <person name="Ponchon L."/>
            <person name="Lurz R."/>
            <person name="Chami M."/>
            <person name="Flayhan A."/>
            <person name="Renouard M."/>
            <person name="Huet A."/>
            <person name="Decottignies P."/>
            <person name="Davidson A.R."/>
            <person name="Breyton C."/>
            <person name="Boulanger P."/>
        </authorList>
    </citation>
    <scope>NUCLEOTIDE SEQUENCE [LARGE SCALE GENOMIC DNA]</scope>
    <source>
        <strain>St0 deletion mutant</strain>
    </source>
</reference>
<reference key="5">
    <citation type="journal article" date="1994" name="J. Bacteriol.">
        <title>Inactivation of FhuA at the cell surface of Escherichia coli K-12 by a phage T5 lipoprotein at the periplasmic face of the outer membrane.</title>
        <authorList>
            <person name="Braun V."/>
            <person name="Killmann H."/>
            <person name="Herrmann C."/>
        </authorList>
    </citation>
    <scope>FUNCTION</scope>
</reference>
<organismHost>
    <name type="scientific">Escherichia coli</name>
    <dbReference type="NCBI Taxonomy" id="562"/>
</organismHost>
<sequence>MKKLFLAMAVVLLSACSTFGPKDIKCEAYYMQDHVKYKANVFDRKGDMFLVSPIMAYGSFWAPVSYFTEGNTCEGVF</sequence>
<accession>Q38162</accession>
<accession>Q66LQ9</accession>